<dbReference type="EC" id="2.7.7.6" evidence="1"/>
<dbReference type="EMBL" id="CP000853">
    <property type="protein sequence ID" value="ABW18046.1"/>
    <property type="molecule type" value="Genomic_DNA"/>
</dbReference>
<dbReference type="SMR" id="A8MLD2"/>
<dbReference type="STRING" id="350688.Clos_0484"/>
<dbReference type="KEGG" id="aoe:Clos_0484"/>
<dbReference type="eggNOG" id="COG0085">
    <property type="taxonomic scope" value="Bacteria"/>
</dbReference>
<dbReference type="HOGENOM" id="CLU_000524_4_1_9"/>
<dbReference type="Proteomes" id="UP000000269">
    <property type="component" value="Chromosome"/>
</dbReference>
<dbReference type="GO" id="GO:0000428">
    <property type="term" value="C:DNA-directed RNA polymerase complex"/>
    <property type="evidence" value="ECO:0007669"/>
    <property type="project" value="UniProtKB-KW"/>
</dbReference>
<dbReference type="GO" id="GO:0003677">
    <property type="term" value="F:DNA binding"/>
    <property type="evidence" value="ECO:0007669"/>
    <property type="project" value="UniProtKB-UniRule"/>
</dbReference>
<dbReference type="GO" id="GO:0003899">
    <property type="term" value="F:DNA-directed RNA polymerase activity"/>
    <property type="evidence" value="ECO:0007669"/>
    <property type="project" value="UniProtKB-UniRule"/>
</dbReference>
<dbReference type="GO" id="GO:0032549">
    <property type="term" value="F:ribonucleoside binding"/>
    <property type="evidence" value="ECO:0007669"/>
    <property type="project" value="InterPro"/>
</dbReference>
<dbReference type="GO" id="GO:0006351">
    <property type="term" value="P:DNA-templated transcription"/>
    <property type="evidence" value="ECO:0007669"/>
    <property type="project" value="UniProtKB-UniRule"/>
</dbReference>
<dbReference type="CDD" id="cd00653">
    <property type="entry name" value="RNA_pol_B_RPB2"/>
    <property type="match status" value="1"/>
</dbReference>
<dbReference type="FunFam" id="3.90.1800.10:FF:000001">
    <property type="entry name" value="DNA-directed RNA polymerase subunit beta"/>
    <property type="match status" value="1"/>
</dbReference>
<dbReference type="Gene3D" id="2.40.50.100">
    <property type="match status" value="1"/>
</dbReference>
<dbReference type="Gene3D" id="2.40.50.150">
    <property type="match status" value="1"/>
</dbReference>
<dbReference type="Gene3D" id="3.90.1100.10">
    <property type="match status" value="2"/>
</dbReference>
<dbReference type="Gene3D" id="2.40.270.10">
    <property type="entry name" value="DNA-directed RNA polymerase, subunit 2, domain 6"/>
    <property type="match status" value="1"/>
</dbReference>
<dbReference type="Gene3D" id="3.90.1800.10">
    <property type="entry name" value="RNA polymerase alpha subunit dimerisation domain"/>
    <property type="match status" value="1"/>
</dbReference>
<dbReference type="Gene3D" id="3.90.1110.10">
    <property type="entry name" value="RNA polymerase Rpb2, domain 2"/>
    <property type="match status" value="1"/>
</dbReference>
<dbReference type="HAMAP" id="MF_01321">
    <property type="entry name" value="RNApol_bact_RpoB"/>
    <property type="match status" value="1"/>
</dbReference>
<dbReference type="InterPro" id="IPR019462">
    <property type="entry name" value="DNA-dir_RNA_pol_bsu_external_1"/>
</dbReference>
<dbReference type="InterPro" id="IPR015712">
    <property type="entry name" value="DNA-dir_RNA_pol_su2"/>
</dbReference>
<dbReference type="InterPro" id="IPR007120">
    <property type="entry name" value="DNA-dir_RNAP_su2_dom"/>
</dbReference>
<dbReference type="InterPro" id="IPR037033">
    <property type="entry name" value="DNA-dir_RNAP_su2_hyb_sf"/>
</dbReference>
<dbReference type="InterPro" id="IPR010243">
    <property type="entry name" value="RNA_pol_bsu_bac"/>
</dbReference>
<dbReference type="InterPro" id="IPR007121">
    <property type="entry name" value="RNA_pol_bsu_CS"/>
</dbReference>
<dbReference type="InterPro" id="IPR007644">
    <property type="entry name" value="RNA_pol_bsu_protrusion"/>
</dbReference>
<dbReference type="InterPro" id="IPR007642">
    <property type="entry name" value="RNA_pol_Rpb2_2"/>
</dbReference>
<dbReference type="InterPro" id="IPR037034">
    <property type="entry name" value="RNA_pol_Rpb2_2_sf"/>
</dbReference>
<dbReference type="InterPro" id="IPR007645">
    <property type="entry name" value="RNA_pol_Rpb2_3"/>
</dbReference>
<dbReference type="InterPro" id="IPR007641">
    <property type="entry name" value="RNA_pol_Rpb2_7"/>
</dbReference>
<dbReference type="InterPro" id="IPR014724">
    <property type="entry name" value="RNA_pol_RPB2_OB-fold"/>
</dbReference>
<dbReference type="NCBIfam" id="NF001616">
    <property type="entry name" value="PRK00405.1"/>
    <property type="match status" value="1"/>
</dbReference>
<dbReference type="NCBIfam" id="TIGR02013">
    <property type="entry name" value="rpoB"/>
    <property type="match status" value="1"/>
</dbReference>
<dbReference type="PANTHER" id="PTHR20856">
    <property type="entry name" value="DNA-DIRECTED RNA POLYMERASE I SUBUNIT 2"/>
    <property type="match status" value="1"/>
</dbReference>
<dbReference type="Pfam" id="PF04563">
    <property type="entry name" value="RNA_pol_Rpb2_1"/>
    <property type="match status" value="1"/>
</dbReference>
<dbReference type="Pfam" id="PF04561">
    <property type="entry name" value="RNA_pol_Rpb2_2"/>
    <property type="match status" value="1"/>
</dbReference>
<dbReference type="Pfam" id="PF04565">
    <property type="entry name" value="RNA_pol_Rpb2_3"/>
    <property type="match status" value="1"/>
</dbReference>
<dbReference type="Pfam" id="PF10385">
    <property type="entry name" value="RNA_pol_Rpb2_45"/>
    <property type="match status" value="1"/>
</dbReference>
<dbReference type="Pfam" id="PF00562">
    <property type="entry name" value="RNA_pol_Rpb2_6"/>
    <property type="match status" value="1"/>
</dbReference>
<dbReference type="Pfam" id="PF04560">
    <property type="entry name" value="RNA_pol_Rpb2_7"/>
    <property type="match status" value="1"/>
</dbReference>
<dbReference type="SUPFAM" id="SSF64484">
    <property type="entry name" value="beta and beta-prime subunits of DNA dependent RNA-polymerase"/>
    <property type="match status" value="1"/>
</dbReference>
<dbReference type="PROSITE" id="PS01166">
    <property type="entry name" value="RNA_POL_BETA"/>
    <property type="match status" value="1"/>
</dbReference>
<organism>
    <name type="scientific">Alkaliphilus oremlandii (strain OhILAs)</name>
    <name type="common">Clostridium oremlandii (strain OhILAs)</name>
    <dbReference type="NCBI Taxonomy" id="350688"/>
    <lineage>
        <taxon>Bacteria</taxon>
        <taxon>Bacillati</taxon>
        <taxon>Bacillota</taxon>
        <taxon>Clostridia</taxon>
        <taxon>Peptostreptococcales</taxon>
        <taxon>Natronincolaceae</taxon>
        <taxon>Alkaliphilus</taxon>
    </lineage>
</organism>
<accession>A8MLD2</accession>
<feature type="chain" id="PRO_0000329162" description="DNA-directed RNA polymerase subunit beta">
    <location>
        <begin position="1"/>
        <end position="1241"/>
    </location>
</feature>
<feature type="region of interest" description="Disordered" evidence="2">
    <location>
        <begin position="1201"/>
        <end position="1224"/>
    </location>
</feature>
<name>RPOB_ALKOO</name>
<keyword id="KW-0240">DNA-directed RNA polymerase</keyword>
<keyword id="KW-0548">Nucleotidyltransferase</keyword>
<keyword id="KW-1185">Reference proteome</keyword>
<keyword id="KW-0804">Transcription</keyword>
<keyword id="KW-0808">Transferase</keyword>
<gene>
    <name evidence="1" type="primary">rpoB</name>
    <name type="ordered locus">Clos_0484</name>
</gene>
<sequence length="1241" mass="139082">MMPHPVQLGKKTRMSYSQIDEVLEMPNLIDLQKDSYQWFLDEGLKEVFDDVSPIEDYTGNLILEFVDYSLDENPKYNIEDSKERDVTYAAPLKVKVRLINKTTGEVKEQEVFMGDFPLMTDTGTFIINGAERVIVNQLVRSPGVYYSREFDKTGKQLFSATVIPNRGAWLEYETDSNDIVSVRIDRTRKQPVTVLLRALGYGSDAQIKELLGEDERLLATLEKDSTKTTDEALLEIYKKLRPGEPPTVENAKSLLRTLFFDPKRYDLAKVGRYKFNKKLSLANRILGKKAAANIVDPSTGEILVEEGTKIDRETSIMVQDSGINEVFIYAEDNKVIKVLGNHFVNINKHIPFNIEELKISDKVYYPVLKEILDTFSQEEDIRDALKERAKELSPKHIIIADIIASISYEFNLAHDTGNIDDIDHLGNRRSRSVGELLQNQFRIGLSRMERVVKERMTIQDVDLATPQALINIRPVAAAIKEFFGSSQLSQFMDQNNPLSELTHKRRLSALGPGGLSRERAGFEVRDVHNSHYGRMCPIETPEGPNIGLINTLSTYARVNEYGFIESPYRKVDKKRGVVTNVIEYLTADEEDLLVIAQANEPLDEEGRFVNKRIACRMQFGAIDIAPANEVDYMDVSPKQVVSVATAMIPFLENDDANRALMGANMQRQAVPLLITDAPIIGTGMEYQSAKDSGVVILAKHDGVIDRLSSNEIVIKRDKDGQKDRYKLLKFKRSNQGTCINQRPIVSKGERVKAGDVIADGPSTNQGEIALGRNCLIGFMTWEGYNYEDAILINEKLVKEDSLTSIHIEEYEAEARDTKLGPEEITRDIPNVGEEALKDLDERGIIRIGAEVQSGDILVGKVTPKGETELTAEERLLRAIFGEKAREVRDTSLKVPHGESGIIVDIKVFSRENGDELPPGVNELVRAYIAQKRKINVGDKMAGRHGNKGVISRVLPAEDMPFLADGTPLEIVLNPLGVPSRMNIGQVLEVHLGLAAKSLGWNVATPVFDGANEHDIMDALEMAGFSRSGKVKLYDGRTGEPFDNDVTVGYMYMLKLHHLVDDKIHARSTGPYSLVTQQPLGGKAQFGGQRFGEMEVWALEAYGAAHTLQEILTVKSDDVVGRVKTYECIVKGENIPEPGVPESFKVLIKELQSLCLDVKVLTEEDSEIEIKESVEDDSGELSIEYGDLTYEADGELEIIEPAEEEQDTDVDYITEDDFESPDPEIDFDEKYLEDDFNSYDDF</sequence>
<reference key="1">
    <citation type="submission" date="2007-10" db="EMBL/GenBank/DDBJ databases">
        <title>Complete genome of Alkaliphilus oremlandii OhILAs.</title>
        <authorList>
            <person name="Copeland A."/>
            <person name="Lucas S."/>
            <person name="Lapidus A."/>
            <person name="Barry K."/>
            <person name="Detter J.C."/>
            <person name="Glavina del Rio T."/>
            <person name="Hammon N."/>
            <person name="Israni S."/>
            <person name="Dalin E."/>
            <person name="Tice H."/>
            <person name="Pitluck S."/>
            <person name="Chain P."/>
            <person name="Malfatti S."/>
            <person name="Shin M."/>
            <person name="Vergez L."/>
            <person name="Schmutz J."/>
            <person name="Larimer F."/>
            <person name="Land M."/>
            <person name="Hauser L."/>
            <person name="Kyrpides N."/>
            <person name="Mikhailova N."/>
            <person name="Stolz J.F."/>
            <person name="Dawson A."/>
            <person name="Fisher E."/>
            <person name="Crable B."/>
            <person name="Perera E."/>
            <person name="Lisak J."/>
            <person name="Ranganathan M."/>
            <person name="Basu P."/>
            <person name="Richardson P."/>
        </authorList>
    </citation>
    <scope>NUCLEOTIDE SEQUENCE [LARGE SCALE GENOMIC DNA]</scope>
    <source>
        <strain>OhILAs</strain>
    </source>
</reference>
<proteinExistence type="inferred from homology"/>
<comment type="function">
    <text evidence="1">DNA-dependent RNA polymerase catalyzes the transcription of DNA into RNA using the four ribonucleoside triphosphates as substrates.</text>
</comment>
<comment type="catalytic activity">
    <reaction evidence="1">
        <text>RNA(n) + a ribonucleoside 5'-triphosphate = RNA(n+1) + diphosphate</text>
        <dbReference type="Rhea" id="RHEA:21248"/>
        <dbReference type="Rhea" id="RHEA-COMP:14527"/>
        <dbReference type="Rhea" id="RHEA-COMP:17342"/>
        <dbReference type="ChEBI" id="CHEBI:33019"/>
        <dbReference type="ChEBI" id="CHEBI:61557"/>
        <dbReference type="ChEBI" id="CHEBI:140395"/>
        <dbReference type="EC" id="2.7.7.6"/>
    </reaction>
</comment>
<comment type="subunit">
    <text evidence="1">The RNAP catalytic core consists of 2 alpha, 1 beta, 1 beta' and 1 omega subunit. When a sigma factor is associated with the core the holoenzyme is formed, which can initiate transcription.</text>
</comment>
<comment type="similarity">
    <text evidence="1">Belongs to the RNA polymerase beta chain family.</text>
</comment>
<protein>
    <recommendedName>
        <fullName evidence="1">DNA-directed RNA polymerase subunit beta</fullName>
        <shortName evidence="1">RNAP subunit beta</shortName>
        <ecNumber evidence="1">2.7.7.6</ecNumber>
    </recommendedName>
    <alternativeName>
        <fullName evidence="1">RNA polymerase subunit beta</fullName>
    </alternativeName>
    <alternativeName>
        <fullName evidence="1">Transcriptase subunit beta</fullName>
    </alternativeName>
</protein>
<evidence type="ECO:0000255" key="1">
    <source>
        <dbReference type="HAMAP-Rule" id="MF_01321"/>
    </source>
</evidence>
<evidence type="ECO:0000256" key="2">
    <source>
        <dbReference type="SAM" id="MobiDB-lite"/>
    </source>
</evidence>